<gene>
    <name evidence="1" type="primary">ureF</name>
    <name type="ordered locus">UPA3_0449</name>
</gene>
<protein>
    <recommendedName>
        <fullName evidence="1">Urease accessory protein UreF</fullName>
    </recommendedName>
</protein>
<name>UREF_UREP2</name>
<proteinExistence type="inferred from homology"/>
<dbReference type="EMBL" id="CP000942">
    <property type="protein sequence ID" value="ACA33128.1"/>
    <property type="molecule type" value="Genomic_DNA"/>
</dbReference>
<dbReference type="RefSeq" id="WP_006689006.1">
    <property type="nucleotide sequence ID" value="NC_010503.1"/>
</dbReference>
<dbReference type="SMR" id="B1AJ71"/>
<dbReference type="GeneID" id="29672335"/>
<dbReference type="KEGG" id="upa:UPA3_0449"/>
<dbReference type="HOGENOM" id="CLU_049215_4_2_14"/>
<dbReference type="Proteomes" id="UP000002162">
    <property type="component" value="Chromosome"/>
</dbReference>
<dbReference type="GO" id="GO:0005737">
    <property type="term" value="C:cytoplasm"/>
    <property type="evidence" value="ECO:0007669"/>
    <property type="project" value="UniProtKB-SubCell"/>
</dbReference>
<dbReference type="GO" id="GO:0016151">
    <property type="term" value="F:nickel cation binding"/>
    <property type="evidence" value="ECO:0007669"/>
    <property type="project" value="UniProtKB-UniRule"/>
</dbReference>
<dbReference type="Gene3D" id="1.10.4190.10">
    <property type="entry name" value="Urease accessory protein UreF"/>
    <property type="match status" value="1"/>
</dbReference>
<dbReference type="HAMAP" id="MF_01385">
    <property type="entry name" value="UreF"/>
    <property type="match status" value="1"/>
</dbReference>
<dbReference type="InterPro" id="IPR002639">
    <property type="entry name" value="UreF"/>
</dbReference>
<dbReference type="InterPro" id="IPR038277">
    <property type="entry name" value="UreF_sf"/>
</dbReference>
<dbReference type="PANTHER" id="PTHR33620">
    <property type="entry name" value="UREASE ACCESSORY PROTEIN F"/>
    <property type="match status" value="1"/>
</dbReference>
<dbReference type="PANTHER" id="PTHR33620:SF1">
    <property type="entry name" value="UREASE ACCESSORY PROTEIN F"/>
    <property type="match status" value="1"/>
</dbReference>
<dbReference type="Pfam" id="PF01730">
    <property type="entry name" value="UreF"/>
    <property type="match status" value="1"/>
</dbReference>
<dbReference type="PIRSF" id="PIRSF009467">
    <property type="entry name" value="Ureas_acces_UreF"/>
    <property type="match status" value="1"/>
</dbReference>
<comment type="function">
    <text evidence="1">Required for maturation of urease via the functional incorporation of the urease nickel metallocenter.</text>
</comment>
<comment type="subunit">
    <text evidence="1">UreD, UreF and UreG form a complex that acts as a GTP-hydrolysis-dependent molecular chaperone, activating the urease apoprotein by helping to assemble the nickel containing metallocenter of UreC. The UreE protein probably delivers the nickel.</text>
</comment>
<comment type="subcellular location">
    <subcellularLocation>
        <location evidence="1">Cytoplasm</location>
    </subcellularLocation>
</comment>
<comment type="similarity">
    <text evidence="1">Belongs to the UreF family.</text>
</comment>
<keyword id="KW-0143">Chaperone</keyword>
<keyword id="KW-0963">Cytoplasm</keyword>
<keyword id="KW-0996">Nickel insertion</keyword>
<organism>
    <name type="scientific">Ureaplasma parvum serovar 3 (strain ATCC 27815 / 27 / NCTC 11736)</name>
    <dbReference type="NCBI Taxonomy" id="505682"/>
    <lineage>
        <taxon>Bacteria</taxon>
        <taxon>Bacillati</taxon>
        <taxon>Mycoplasmatota</taxon>
        <taxon>Mycoplasmoidales</taxon>
        <taxon>Mycoplasmoidaceae</taxon>
        <taxon>Ureaplasma</taxon>
    </lineage>
</organism>
<sequence>MTLNSDYLNLLDLMQITNANFPIGTFSHSFGVETYIRKDIVFDGESLIKALLLYMNEQLLHGDLLAIYQIFKLLPKQKINAIWEIDQMINFQGLARETREGQRRIGQQMVKIYNELFNCELLVEYAERIKNKKSYGNPAVAFALLAMHLKIDLKTALYTHLYSTVAALTQNCVRAIPLGQVKGQKIIYQLKHVYFDDIVNKVFTLDFKTDFCKNIPGLEIAQMEHEDTPVRLFMS</sequence>
<feature type="chain" id="PRO_0000344199" description="Urease accessory protein UreF">
    <location>
        <begin position="1"/>
        <end position="235"/>
    </location>
</feature>
<evidence type="ECO:0000255" key="1">
    <source>
        <dbReference type="HAMAP-Rule" id="MF_01385"/>
    </source>
</evidence>
<reference key="1">
    <citation type="submission" date="2008-02" db="EMBL/GenBank/DDBJ databases">
        <title>Genome sequence of Ureaplasma parvum serovar 3.</title>
        <authorList>
            <person name="Methe B.A."/>
            <person name="Glass J."/>
            <person name="Waites K."/>
            <person name="Shrivastava S."/>
        </authorList>
    </citation>
    <scope>NUCLEOTIDE SEQUENCE [LARGE SCALE GENOMIC DNA]</scope>
    <source>
        <strain>ATCC 27815 / 27 / NCTC 11736</strain>
    </source>
</reference>
<accession>B1AJ71</accession>